<sequence length="351" mass="39148">MQVSDFHFDLPNELIARYPQPERTASRLLQLTGETGNIQHKGFKDVLDLAESGDLFVFNNTRVIPARIFGRKASGGKIEVLVERILDDKSILAHVRASKSPKPGNELLLGENDDYQAEMIARHDTLFEIRFNSDKTVLEILEEVGHMPLPPYIDRPDEDADKERYQTVYNAKPGAVAAPTAGLHFDDKLMAALKAKGVNFAFVTLHVGAGTFQPVRVDNIDDHHMHSEYVEVPQDVVDAVNATKANGGRIIAVGTTSVRSLESAAQDAVKKGTELVPFFGDTEIFIFPGYEFQLVDVLVTNFHLPESTLIMLVSAFAGYEHTMNAYLQAVDNKYRFFSYGDSMFITRRNNV</sequence>
<organism>
    <name type="scientific">Photobacterium profundum (strain SS9)</name>
    <dbReference type="NCBI Taxonomy" id="298386"/>
    <lineage>
        <taxon>Bacteria</taxon>
        <taxon>Pseudomonadati</taxon>
        <taxon>Pseudomonadota</taxon>
        <taxon>Gammaproteobacteria</taxon>
        <taxon>Vibrionales</taxon>
        <taxon>Vibrionaceae</taxon>
        <taxon>Photobacterium</taxon>
    </lineage>
</organism>
<accession>Q6LU70</accession>
<protein>
    <recommendedName>
        <fullName evidence="1">S-adenosylmethionine:tRNA ribosyltransferase-isomerase</fullName>
        <ecNumber evidence="1">2.4.99.17</ecNumber>
    </recommendedName>
    <alternativeName>
        <fullName evidence="1">Queuosine biosynthesis protein QueA</fullName>
    </alternativeName>
</protein>
<dbReference type="EC" id="2.4.99.17" evidence="1"/>
<dbReference type="EMBL" id="CR378665">
    <property type="protein sequence ID" value="CAG19155.1"/>
    <property type="status" value="ALT_INIT"/>
    <property type="molecule type" value="Genomic_DNA"/>
</dbReference>
<dbReference type="RefSeq" id="WP_041393912.1">
    <property type="nucleotide sequence ID" value="NC_006370.1"/>
</dbReference>
<dbReference type="SMR" id="Q6LU70"/>
<dbReference type="STRING" id="298386.PBPRA0742"/>
<dbReference type="KEGG" id="ppr:PBPRA0742"/>
<dbReference type="eggNOG" id="COG0809">
    <property type="taxonomic scope" value="Bacteria"/>
</dbReference>
<dbReference type="HOGENOM" id="CLU_039110_1_0_6"/>
<dbReference type="UniPathway" id="UPA00392"/>
<dbReference type="Proteomes" id="UP000000593">
    <property type="component" value="Chromosome 1"/>
</dbReference>
<dbReference type="GO" id="GO:0005737">
    <property type="term" value="C:cytoplasm"/>
    <property type="evidence" value="ECO:0007669"/>
    <property type="project" value="UniProtKB-SubCell"/>
</dbReference>
<dbReference type="GO" id="GO:0051075">
    <property type="term" value="F:S-adenosylmethionine:tRNA ribosyltransferase-isomerase activity"/>
    <property type="evidence" value="ECO:0007669"/>
    <property type="project" value="UniProtKB-EC"/>
</dbReference>
<dbReference type="GO" id="GO:0008616">
    <property type="term" value="P:queuosine biosynthetic process"/>
    <property type="evidence" value="ECO:0007669"/>
    <property type="project" value="UniProtKB-UniRule"/>
</dbReference>
<dbReference type="GO" id="GO:0002099">
    <property type="term" value="P:tRNA wobble guanine modification"/>
    <property type="evidence" value="ECO:0007669"/>
    <property type="project" value="TreeGrafter"/>
</dbReference>
<dbReference type="FunFam" id="2.40.10.240:FF:000001">
    <property type="entry name" value="S-adenosylmethionine:tRNA ribosyltransferase-isomerase"/>
    <property type="match status" value="1"/>
</dbReference>
<dbReference type="FunFam" id="3.40.1780.10:FF:000001">
    <property type="entry name" value="S-adenosylmethionine:tRNA ribosyltransferase-isomerase"/>
    <property type="match status" value="1"/>
</dbReference>
<dbReference type="Gene3D" id="2.40.10.240">
    <property type="entry name" value="QueA-like"/>
    <property type="match status" value="1"/>
</dbReference>
<dbReference type="Gene3D" id="3.40.1780.10">
    <property type="entry name" value="QueA-like"/>
    <property type="match status" value="1"/>
</dbReference>
<dbReference type="HAMAP" id="MF_00113">
    <property type="entry name" value="QueA"/>
    <property type="match status" value="1"/>
</dbReference>
<dbReference type="InterPro" id="IPR003699">
    <property type="entry name" value="QueA"/>
</dbReference>
<dbReference type="InterPro" id="IPR042118">
    <property type="entry name" value="QueA_dom1"/>
</dbReference>
<dbReference type="InterPro" id="IPR042119">
    <property type="entry name" value="QueA_dom2"/>
</dbReference>
<dbReference type="InterPro" id="IPR036100">
    <property type="entry name" value="QueA_sf"/>
</dbReference>
<dbReference type="NCBIfam" id="NF001140">
    <property type="entry name" value="PRK00147.1"/>
    <property type="match status" value="1"/>
</dbReference>
<dbReference type="NCBIfam" id="TIGR00113">
    <property type="entry name" value="queA"/>
    <property type="match status" value="1"/>
</dbReference>
<dbReference type="PANTHER" id="PTHR30307">
    <property type="entry name" value="S-ADENOSYLMETHIONINE:TRNA RIBOSYLTRANSFERASE-ISOMERASE"/>
    <property type="match status" value="1"/>
</dbReference>
<dbReference type="PANTHER" id="PTHR30307:SF0">
    <property type="entry name" value="S-ADENOSYLMETHIONINE:TRNA RIBOSYLTRANSFERASE-ISOMERASE"/>
    <property type="match status" value="1"/>
</dbReference>
<dbReference type="Pfam" id="PF02547">
    <property type="entry name" value="Queuosine_synth"/>
    <property type="match status" value="1"/>
</dbReference>
<dbReference type="SUPFAM" id="SSF111337">
    <property type="entry name" value="QueA-like"/>
    <property type="match status" value="1"/>
</dbReference>
<name>QUEA_PHOPR</name>
<proteinExistence type="inferred from homology"/>
<reference key="1">
    <citation type="journal article" date="2005" name="Science">
        <title>Life at depth: Photobacterium profundum genome sequence and expression analysis.</title>
        <authorList>
            <person name="Vezzi A."/>
            <person name="Campanaro S."/>
            <person name="D'Angelo M."/>
            <person name="Simonato F."/>
            <person name="Vitulo N."/>
            <person name="Lauro F.M."/>
            <person name="Cestaro A."/>
            <person name="Malacrida G."/>
            <person name="Simionati B."/>
            <person name="Cannata N."/>
            <person name="Romualdi C."/>
            <person name="Bartlett D.H."/>
            <person name="Valle G."/>
        </authorList>
    </citation>
    <scope>NUCLEOTIDE SEQUENCE [LARGE SCALE GENOMIC DNA]</scope>
    <source>
        <strain>ATCC BAA-1253 / SS9</strain>
    </source>
</reference>
<keyword id="KW-0963">Cytoplasm</keyword>
<keyword id="KW-0671">Queuosine biosynthesis</keyword>
<keyword id="KW-1185">Reference proteome</keyword>
<keyword id="KW-0949">S-adenosyl-L-methionine</keyword>
<keyword id="KW-0808">Transferase</keyword>
<feature type="chain" id="PRO_0000231356" description="S-adenosylmethionine:tRNA ribosyltransferase-isomerase">
    <location>
        <begin position="1"/>
        <end position="351"/>
    </location>
</feature>
<comment type="function">
    <text evidence="1">Transfers and isomerizes the ribose moiety from AdoMet to the 7-aminomethyl group of 7-deazaguanine (preQ1-tRNA) to give epoxyqueuosine (oQ-tRNA).</text>
</comment>
<comment type="catalytic activity">
    <reaction evidence="1">
        <text>7-aminomethyl-7-carbaguanosine(34) in tRNA + S-adenosyl-L-methionine = epoxyqueuosine(34) in tRNA + adenine + L-methionine + 2 H(+)</text>
        <dbReference type="Rhea" id="RHEA:32155"/>
        <dbReference type="Rhea" id="RHEA-COMP:10342"/>
        <dbReference type="Rhea" id="RHEA-COMP:18582"/>
        <dbReference type="ChEBI" id="CHEBI:15378"/>
        <dbReference type="ChEBI" id="CHEBI:16708"/>
        <dbReference type="ChEBI" id="CHEBI:57844"/>
        <dbReference type="ChEBI" id="CHEBI:59789"/>
        <dbReference type="ChEBI" id="CHEBI:82833"/>
        <dbReference type="ChEBI" id="CHEBI:194443"/>
        <dbReference type="EC" id="2.4.99.17"/>
    </reaction>
</comment>
<comment type="pathway">
    <text evidence="1">tRNA modification; tRNA-queuosine biosynthesis.</text>
</comment>
<comment type="subunit">
    <text evidence="1">Monomer.</text>
</comment>
<comment type="subcellular location">
    <subcellularLocation>
        <location evidence="1">Cytoplasm</location>
    </subcellularLocation>
</comment>
<comment type="similarity">
    <text evidence="1">Belongs to the QueA family.</text>
</comment>
<comment type="sequence caution" evidence="2">
    <conflict type="erroneous initiation">
        <sequence resource="EMBL-CDS" id="CAG19155"/>
    </conflict>
</comment>
<evidence type="ECO:0000255" key="1">
    <source>
        <dbReference type="HAMAP-Rule" id="MF_00113"/>
    </source>
</evidence>
<evidence type="ECO:0000305" key="2"/>
<gene>
    <name evidence="1" type="primary">queA</name>
    <name type="ordered locus">PBPRA0742</name>
</gene>